<reference key="1">
    <citation type="submission" date="2008-06" db="EMBL/GenBank/DDBJ databases">
        <title>Complete sequence of Stenotrophomonas maltophilia R551-3.</title>
        <authorList>
            <consortium name="US DOE Joint Genome Institute"/>
            <person name="Lucas S."/>
            <person name="Copeland A."/>
            <person name="Lapidus A."/>
            <person name="Glavina del Rio T."/>
            <person name="Dalin E."/>
            <person name="Tice H."/>
            <person name="Pitluck S."/>
            <person name="Chain P."/>
            <person name="Malfatti S."/>
            <person name="Shin M."/>
            <person name="Vergez L."/>
            <person name="Lang D."/>
            <person name="Schmutz J."/>
            <person name="Larimer F."/>
            <person name="Land M."/>
            <person name="Hauser L."/>
            <person name="Kyrpides N."/>
            <person name="Mikhailova N."/>
            <person name="Taghavi S."/>
            <person name="Monchy S."/>
            <person name="Newman L."/>
            <person name="Vangronsveld J."/>
            <person name="van der Lelie D."/>
            <person name="Richardson P."/>
        </authorList>
    </citation>
    <scope>NUCLEOTIDE SEQUENCE [LARGE SCALE GENOMIC DNA]</scope>
    <source>
        <strain>R551-3</strain>
    </source>
</reference>
<gene>
    <name evidence="1" type="primary">bpt</name>
    <name type="ordered locus">Smal_1109</name>
</gene>
<accession>B4SP02</accession>
<sequence length="251" mass="29132">MAIHGDRDDELRLFQTGEHPCGYWSDRVARDLVLDPHDRRLGGLYPLALSWGFRRSGDLVYRPHCAHCQACVAVRIPVARFAPDRSQRRCAARNEDLEVRITAATARDDLFALYHRYLTHRHANGGMDDHGPHEFEQFLIGSWSHTRFMEMRLPGHDGQPSQLLGVAVTDVTEHGLSAVYTFFDPDHAARGLGTFAILQQIEWARREGLPHVYLGYWIRGHQKMDYKRRYRPLEAYDGRRWHDFDDELDGR</sequence>
<organism>
    <name type="scientific">Stenotrophomonas maltophilia (strain R551-3)</name>
    <dbReference type="NCBI Taxonomy" id="391008"/>
    <lineage>
        <taxon>Bacteria</taxon>
        <taxon>Pseudomonadati</taxon>
        <taxon>Pseudomonadota</taxon>
        <taxon>Gammaproteobacteria</taxon>
        <taxon>Lysobacterales</taxon>
        <taxon>Lysobacteraceae</taxon>
        <taxon>Stenotrophomonas</taxon>
        <taxon>Stenotrophomonas maltophilia group</taxon>
    </lineage>
</organism>
<protein>
    <recommendedName>
        <fullName evidence="1">Aspartate/glutamate leucyltransferase</fullName>
        <ecNumber evidence="1">2.3.2.29</ecNumber>
    </recommendedName>
</protein>
<feature type="chain" id="PRO_1000131998" description="Aspartate/glutamate leucyltransferase">
    <location>
        <begin position="1"/>
        <end position="251"/>
    </location>
</feature>
<comment type="function">
    <text evidence="1">Functions in the N-end rule pathway of protein degradation where it conjugates Leu from its aminoacyl-tRNA to the N-termini of proteins containing an N-terminal aspartate or glutamate.</text>
</comment>
<comment type="catalytic activity">
    <reaction evidence="1">
        <text>N-terminal L-glutamyl-[protein] + L-leucyl-tRNA(Leu) = N-terminal L-leucyl-L-glutamyl-[protein] + tRNA(Leu) + H(+)</text>
        <dbReference type="Rhea" id="RHEA:50412"/>
        <dbReference type="Rhea" id="RHEA-COMP:9613"/>
        <dbReference type="Rhea" id="RHEA-COMP:9622"/>
        <dbReference type="Rhea" id="RHEA-COMP:12664"/>
        <dbReference type="Rhea" id="RHEA-COMP:12668"/>
        <dbReference type="ChEBI" id="CHEBI:15378"/>
        <dbReference type="ChEBI" id="CHEBI:64721"/>
        <dbReference type="ChEBI" id="CHEBI:78442"/>
        <dbReference type="ChEBI" id="CHEBI:78494"/>
        <dbReference type="ChEBI" id="CHEBI:133041"/>
        <dbReference type="EC" id="2.3.2.29"/>
    </reaction>
</comment>
<comment type="catalytic activity">
    <reaction evidence="1">
        <text>N-terminal L-aspartyl-[protein] + L-leucyl-tRNA(Leu) = N-terminal L-leucyl-L-aspartyl-[protein] + tRNA(Leu) + H(+)</text>
        <dbReference type="Rhea" id="RHEA:50420"/>
        <dbReference type="Rhea" id="RHEA-COMP:9613"/>
        <dbReference type="Rhea" id="RHEA-COMP:9622"/>
        <dbReference type="Rhea" id="RHEA-COMP:12669"/>
        <dbReference type="Rhea" id="RHEA-COMP:12674"/>
        <dbReference type="ChEBI" id="CHEBI:15378"/>
        <dbReference type="ChEBI" id="CHEBI:64720"/>
        <dbReference type="ChEBI" id="CHEBI:78442"/>
        <dbReference type="ChEBI" id="CHEBI:78494"/>
        <dbReference type="ChEBI" id="CHEBI:133042"/>
        <dbReference type="EC" id="2.3.2.29"/>
    </reaction>
</comment>
<comment type="subcellular location">
    <subcellularLocation>
        <location evidence="1">Cytoplasm</location>
    </subcellularLocation>
</comment>
<comment type="similarity">
    <text evidence="1">Belongs to the R-transferase family. Bpt subfamily.</text>
</comment>
<dbReference type="EC" id="2.3.2.29" evidence="1"/>
<dbReference type="EMBL" id="CP001111">
    <property type="protein sequence ID" value="ACF50814.1"/>
    <property type="molecule type" value="Genomic_DNA"/>
</dbReference>
<dbReference type="RefSeq" id="WP_012510405.1">
    <property type="nucleotide sequence ID" value="NC_011071.1"/>
</dbReference>
<dbReference type="SMR" id="B4SP02"/>
<dbReference type="STRING" id="391008.Smal_1109"/>
<dbReference type="KEGG" id="smt:Smal_1109"/>
<dbReference type="eggNOG" id="COG2935">
    <property type="taxonomic scope" value="Bacteria"/>
</dbReference>
<dbReference type="HOGENOM" id="CLU_077607_0_0_6"/>
<dbReference type="OrthoDB" id="9782022at2"/>
<dbReference type="Proteomes" id="UP000001867">
    <property type="component" value="Chromosome"/>
</dbReference>
<dbReference type="GO" id="GO:0005737">
    <property type="term" value="C:cytoplasm"/>
    <property type="evidence" value="ECO:0007669"/>
    <property type="project" value="UniProtKB-SubCell"/>
</dbReference>
<dbReference type="GO" id="GO:0004057">
    <property type="term" value="F:arginyl-tRNA--protein transferase activity"/>
    <property type="evidence" value="ECO:0007669"/>
    <property type="project" value="InterPro"/>
</dbReference>
<dbReference type="GO" id="GO:0008914">
    <property type="term" value="F:leucyl-tRNA--protein transferase activity"/>
    <property type="evidence" value="ECO:0007669"/>
    <property type="project" value="UniProtKB-UniRule"/>
</dbReference>
<dbReference type="GO" id="GO:0071596">
    <property type="term" value="P:ubiquitin-dependent protein catabolic process via the N-end rule pathway"/>
    <property type="evidence" value="ECO:0007669"/>
    <property type="project" value="InterPro"/>
</dbReference>
<dbReference type="HAMAP" id="MF_00689">
    <property type="entry name" value="Bpt"/>
    <property type="match status" value="1"/>
</dbReference>
<dbReference type="InterPro" id="IPR016181">
    <property type="entry name" value="Acyl_CoA_acyltransferase"/>
</dbReference>
<dbReference type="InterPro" id="IPR017138">
    <property type="entry name" value="Asp_Glu_LeuTrfase"/>
</dbReference>
<dbReference type="InterPro" id="IPR030700">
    <property type="entry name" value="N-end_Aminoacyl_Trfase"/>
</dbReference>
<dbReference type="InterPro" id="IPR007472">
    <property type="entry name" value="N-end_Aminoacyl_Trfase_C"/>
</dbReference>
<dbReference type="InterPro" id="IPR007471">
    <property type="entry name" value="N-end_Aminoacyl_Trfase_N"/>
</dbReference>
<dbReference type="NCBIfam" id="NF002341">
    <property type="entry name" value="PRK01305.1-1"/>
    <property type="match status" value="1"/>
</dbReference>
<dbReference type="NCBIfam" id="NF002342">
    <property type="entry name" value="PRK01305.1-3"/>
    <property type="match status" value="1"/>
</dbReference>
<dbReference type="NCBIfam" id="NF002346">
    <property type="entry name" value="PRK01305.2-3"/>
    <property type="match status" value="1"/>
</dbReference>
<dbReference type="PANTHER" id="PTHR21367">
    <property type="entry name" value="ARGININE-TRNA-PROTEIN TRANSFERASE 1"/>
    <property type="match status" value="1"/>
</dbReference>
<dbReference type="PANTHER" id="PTHR21367:SF1">
    <property type="entry name" value="ARGINYL-TRNA--PROTEIN TRANSFERASE 1"/>
    <property type="match status" value="1"/>
</dbReference>
<dbReference type="Pfam" id="PF04377">
    <property type="entry name" value="ATE_C"/>
    <property type="match status" value="1"/>
</dbReference>
<dbReference type="Pfam" id="PF04376">
    <property type="entry name" value="ATE_N"/>
    <property type="match status" value="1"/>
</dbReference>
<dbReference type="PIRSF" id="PIRSF037208">
    <property type="entry name" value="ATE_pro_prd"/>
    <property type="match status" value="1"/>
</dbReference>
<dbReference type="SUPFAM" id="SSF55729">
    <property type="entry name" value="Acyl-CoA N-acyltransferases (Nat)"/>
    <property type="match status" value="1"/>
</dbReference>
<proteinExistence type="inferred from homology"/>
<keyword id="KW-0012">Acyltransferase</keyword>
<keyword id="KW-0963">Cytoplasm</keyword>
<keyword id="KW-0808">Transferase</keyword>
<evidence type="ECO:0000255" key="1">
    <source>
        <dbReference type="HAMAP-Rule" id="MF_00689"/>
    </source>
</evidence>
<name>BPT_STRM5</name>